<name>DAPAT_BACTN</name>
<feature type="chain" id="PRO_0000342215" description="LL-diaminopimelate aminotransferase">
    <location>
        <begin position="1"/>
        <end position="410"/>
    </location>
</feature>
<feature type="binding site" evidence="1">
    <location>
        <position position="15"/>
    </location>
    <ligand>
        <name>substrate</name>
    </ligand>
</feature>
<feature type="binding site" evidence="1">
    <location>
        <position position="42"/>
    </location>
    <ligand>
        <name>substrate</name>
    </ligand>
</feature>
<feature type="binding site" evidence="1">
    <location>
        <position position="72"/>
    </location>
    <ligand>
        <name>pyridoxal 5'-phosphate</name>
        <dbReference type="ChEBI" id="CHEBI:597326"/>
    </ligand>
</feature>
<feature type="binding site" evidence="1">
    <location>
        <begin position="108"/>
        <end position="109"/>
    </location>
    <ligand>
        <name>pyridoxal 5'-phosphate</name>
        <dbReference type="ChEBI" id="CHEBI:597326"/>
    </ligand>
</feature>
<feature type="binding site" evidence="1">
    <location>
        <position position="109"/>
    </location>
    <ligand>
        <name>substrate</name>
    </ligand>
</feature>
<feature type="binding site" evidence="1">
    <location>
        <position position="132"/>
    </location>
    <ligand>
        <name>pyridoxal 5'-phosphate</name>
        <dbReference type="ChEBI" id="CHEBI:597326"/>
    </ligand>
</feature>
<feature type="binding site" evidence="1">
    <location>
        <position position="132"/>
    </location>
    <ligand>
        <name>substrate</name>
    </ligand>
</feature>
<feature type="binding site" evidence="1">
    <location>
        <position position="188"/>
    </location>
    <ligand>
        <name>pyridoxal 5'-phosphate</name>
        <dbReference type="ChEBI" id="CHEBI:597326"/>
    </ligand>
</feature>
<feature type="binding site" evidence="1">
    <location>
        <position position="188"/>
    </location>
    <ligand>
        <name>substrate</name>
    </ligand>
</feature>
<feature type="binding site" evidence="1">
    <location>
        <position position="219"/>
    </location>
    <ligand>
        <name>pyridoxal 5'-phosphate</name>
        <dbReference type="ChEBI" id="CHEBI:597326"/>
    </ligand>
</feature>
<feature type="binding site" evidence="1">
    <location>
        <begin position="247"/>
        <end position="249"/>
    </location>
    <ligand>
        <name>pyridoxal 5'-phosphate</name>
        <dbReference type="ChEBI" id="CHEBI:597326"/>
    </ligand>
</feature>
<feature type="binding site" evidence="1">
    <location>
        <position position="258"/>
    </location>
    <ligand>
        <name>pyridoxal 5'-phosphate</name>
        <dbReference type="ChEBI" id="CHEBI:597326"/>
    </ligand>
</feature>
<feature type="binding site" evidence="1">
    <location>
        <position position="293"/>
    </location>
    <ligand>
        <name>pyridoxal 5'-phosphate</name>
        <dbReference type="ChEBI" id="CHEBI:597326"/>
    </ligand>
</feature>
<feature type="binding site" evidence="1">
    <location>
        <position position="293"/>
    </location>
    <ligand>
        <name>substrate</name>
    </ligand>
</feature>
<feature type="binding site" evidence="1">
    <location>
        <position position="389"/>
    </location>
    <ligand>
        <name>substrate</name>
    </ligand>
</feature>
<feature type="modified residue" description="N6-(pyridoxal phosphate)lysine" evidence="1">
    <location>
        <position position="250"/>
    </location>
</feature>
<evidence type="ECO:0000255" key="1">
    <source>
        <dbReference type="HAMAP-Rule" id="MF_01642"/>
    </source>
</evidence>
<keyword id="KW-0032">Aminotransferase</keyword>
<keyword id="KW-0663">Pyridoxal phosphate</keyword>
<keyword id="KW-1185">Reference proteome</keyword>
<keyword id="KW-0808">Transferase</keyword>
<accession>Q8AAB8</accession>
<gene>
    <name evidence="1" type="primary">dapL</name>
    <name type="ordered locus">BT_0547</name>
</gene>
<comment type="function">
    <text evidence="1">Involved in the synthesis of meso-diaminopimelate (m-DAP or DL-DAP), required for both lysine and peptidoglycan biosynthesis. Catalyzes the direct conversion of tetrahydrodipicolinate to LL-diaminopimelate.</text>
</comment>
<comment type="catalytic activity">
    <reaction evidence="1">
        <text>(2S,6S)-2,6-diaminopimelate + 2-oxoglutarate = (S)-2,3,4,5-tetrahydrodipicolinate + L-glutamate + H2O + H(+)</text>
        <dbReference type="Rhea" id="RHEA:23988"/>
        <dbReference type="ChEBI" id="CHEBI:15377"/>
        <dbReference type="ChEBI" id="CHEBI:15378"/>
        <dbReference type="ChEBI" id="CHEBI:16810"/>
        <dbReference type="ChEBI" id="CHEBI:16845"/>
        <dbReference type="ChEBI" id="CHEBI:29985"/>
        <dbReference type="ChEBI" id="CHEBI:57609"/>
        <dbReference type="EC" id="2.6.1.83"/>
    </reaction>
</comment>
<comment type="cofactor">
    <cofactor evidence="1">
        <name>pyridoxal 5'-phosphate</name>
        <dbReference type="ChEBI" id="CHEBI:597326"/>
    </cofactor>
</comment>
<comment type="pathway">
    <text evidence="1">Amino-acid biosynthesis; L-lysine biosynthesis via DAP pathway; LL-2,6-diaminopimelate from (S)-tetrahydrodipicolinate (aminotransferase route): step 1/1.</text>
</comment>
<comment type="subunit">
    <text evidence="1">Homodimer.</text>
</comment>
<comment type="similarity">
    <text evidence="1">Belongs to the class-I pyridoxal-phosphate-dependent aminotransferase family. LL-diaminopimelate aminotransferase subfamily.</text>
</comment>
<organism>
    <name type="scientific">Bacteroides thetaiotaomicron (strain ATCC 29148 / DSM 2079 / JCM 5827 / CCUG 10774 / NCTC 10582 / VPI-5482 / E50)</name>
    <dbReference type="NCBI Taxonomy" id="226186"/>
    <lineage>
        <taxon>Bacteria</taxon>
        <taxon>Pseudomonadati</taxon>
        <taxon>Bacteroidota</taxon>
        <taxon>Bacteroidia</taxon>
        <taxon>Bacteroidales</taxon>
        <taxon>Bacteroidaceae</taxon>
        <taxon>Bacteroides</taxon>
    </lineage>
</organism>
<dbReference type="EC" id="2.6.1.83" evidence="1"/>
<dbReference type="EMBL" id="AE015928">
    <property type="protein sequence ID" value="AAO75654.1"/>
    <property type="molecule type" value="Genomic_DNA"/>
</dbReference>
<dbReference type="RefSeq" id="NP_809460.1">
    <property type="nucleotide sequence ID" value="NC_004663.1"/>
</dbReference>
<dbReference type="RefSeq" id="WP_008765060.1">
    <property type="nucleotide sequence ID" value="NC_004663.1"/>
</dbReference>
<dbReference type="SMR" id="Q8AAB8"/>
<dbReference type="STRING" id="226186.BT_0547"/>
<dbReference type="PaxDb" id="226186-BT_0547"/>
<dbReference type="EnsemblBacteria" id="AAO75654">
    <property type="protein sequence ID" value="AAO75654"/>
    <property type="gene ID" value="BT_0547"/>
</dbReference>
<dbReference type="GeneID" id="60926504"/>
<dbReference type="KEGG" id="bth:BT_0547"/>
<dbReference type="PATRIC" id="fig|226186.12.peg.547"/>
<dbReference type="eggNOG" id="COG0436">
    <property type="taxonomic scope" value="Bacteria"/>
</dbReference>
<dbReference type="HOGENOM" id="CLU_051433_0_0_10"/>
<dbReference type="InParanoid" id="Q8AAB8"/>
<dbReference type="OrthoDB" id="9813612at2"/>
<dbReference type="UniPathway" id="UPA00034">
    <property type="reaction ID" value="UER00466"/>
</dbReference>
<dbReference type="Proteomes" id="UP000001414">
    <property type="component" value="Chromosome"/>
</dbReference>
<dbReference type="GO" id="GO:0010285">
    <property type="term" value="F:L,L-diaminopimelate aminotransferase activity"/>
    <property type="evidence" value="ECO:0007669"/>
    <property type="project" value="UniProtKB-UniRule"/>
</dbReference>
<dbReference type="GO" id="GO:0030170">
    <property type="term" value="F:pyridoxal phosphate binding"/>
    <property type="evidence" value="ECO:0007669"/>
    <property type="project" value="UniProtKB-UniRule"/>
</dbReference>
<dbReference type="GO" id="GO:0033362">
    <property type="term" value="P:lysine biosynthetic process via diaminopimelate, diaminopimelate-aminotransferase pathway"/>
    <property type="evidence" value="ECO:0007669"/>
    <property type="project" value="UniProtKB-UniRule"/>
</dbReference>
<dbReference type="CDD" id="cd00609">
    <property type="entry name" value="AAT_like"/>
    <property type="match status" value="1"/>
</dbReference>
<dbReference type="FunFam" id="3.40.640.10:FF:000099">
    <property type="entry name" value="LL-diaminopimelate aminotransferase, chloroplastic"/>
    <property type="match status" value="1"/>
</dbReference>
<dbReference type="Gene3D" id="3.90.1150.10">
    <property type="entry name" value="Aspartate Aminotransferase, domain 1"/>
    <property type="match status" value="1"/>
</dbReference>
<dbReference type="Gene3D" id="3.40.640.10">
    <property type="entry name" value="Type I PLP-dependent aspartate aminotransferase-like (Major domain)"/>
    <property type="match status" value="1"/>
</dbReference>
<dbReference type="HAMAP" id="MF_01642">
    <property type="entry name" value="DapL_aminotrans_1"/>
    <property type="match status" value="1"/>
</dbReference>
<dbReference type="InterPro" id="IPR004839">
    <property type="entry name" value="Aminotransferase_I/II_large"/>
</dbReference>
<dbReference type="InterPro" id="IPR019942">
    <property type="entry name" value="DapL/ALD1"/>
</dbReference>
<dbReference type="InterPro" id="IPR015424">
    <property type="entry name" value="PyrdxlP-dep_Trfase"/>
</dbReference>
<dbReference type="InterPro" id="IPR015421">
    <property type="entry name" value="PyrdxlP-dep_Trfase_major"/>
</dbReference>
<dbReference type="InterPro" id="IPR015422">
    <property type="entry name" value="PyrdxlP-dep_Trfase_small"/>
</dbReference>
<dbReference type="NCBIfam" id="TIGR03542">
    <property type="entry name" value="DAPAT_plant"/>
    <property type="match status" value="1"/>
</dbReference>
<dbReference type="PANTHER" id="PTHR43144">
    <property type="entry name" value="AMINOTRANSFERASE"/>
    <property type="match status" value="1"/>
</dbReference>
<dbReference type="Pfam" id="PF00155">
    <property type="entry name" value="Aminotran_1_2"/>
    <property type="match status" value="1"/>
</dbReference>
<dbReference type="SUPFAM" id="SSF53383">
    <property type="entry name" value="PLP-dependent transferases"/>
    <property type="match status" value="1"/>
</dbReference>
<sequence>MALVNEHFLKLPGSYLFSDIAKKVNTFKITHPKQDIIRLGIGDVTQPLPKACIEAMHKAVEELASKDTFRGYGPEQGYDFLIEAIIKNDFAPRGIHFSPSEIFVNDGAKSDTGNIGDILRHDNSVGVTDPIYPVYIDSNVMCGRAGVLEEGTGKWSNVTYMPCTSENDFIPEIPDKRIDIVYLCYPNNPTGTTLTKPELKKWVDYALANDTLILFDAAYEAYIQDADVPHSIYEIKGAKKCAIEFRSFSKTAGFTGVRCGYTVVPKELTAATLEGDRIPLNKLWNRRQCTKFNGTSYITQRAAEAVYSTEGKAQIKETINYYMSNAKIMKEGLEATGLKVYGGVNAPYLWVKTPNGLSSWRFFEQMLYEANVVGTPGVGFGPSGEGYIRLTAFGDHNDCMEAMRRIKNWL</sequence>
<reference key="1">
    <citation type="journal article" date="2003" name="Science">
        <title>A genomic view of the human-Bacteroides thetaiotaomicron symbiosis.</title>
        <authorList>
            <person name="Xu J."/>
            <person name="Bjursell M.K."/>
            <person name="Himrod J."/>
            <person name="Deng S."/>
            <person name="Carmichael L.K."/>
            <person name="Chiang H.C."/>
            <person name="Hooper L.V."/>
            <person name="Gordon J.I."/>
        </authorList>
    </citation>
    <scope>NUCLEOTIDE SEQUENCE [LARGE SCALE GENOMIC DNA]</scope>
    <source>
        <strain>ATCC 29148 / DSM 2079 / JCM 5827 / CCUG 10774 / NCTC 10582 / VPI-5482 / E50</strain>
    </source>
</reference>
<proteinExistence type="inferred from homology"/>
<protein>
    <recommendedName>
        <fullName evidence="1">LL-diaminopimelate aminotransferase</fullName>
        <shortName evidence="1">DAP-AT</shortName>
        <shortName evidence="1">DAP-aminotransferase</shortName>
        <shortName evidence="1">LL-DAP-aminotransferase</shortName>
        <ecNumber evidence="1">2.6.1.83</ecNumber>
    </recommendedName>
</protein>